<reference key="1">
    <citation type="journal article" date="2005" name="Proc. Natl. Acad. Sci. U.S.A.">
        <title>Complete genome sequencing of Anaplasma marginale reveals that the surface is skewed to two superfamilies of outer membrane proteins.</title>
        <authorList>
            <person name="Brayton K.A."/>
            <person name="Kappmeyer L.S."/>
            <person name="Herndon D.R."/>
            <person name="Dark M.J."/>
            <person name="Tibbals D.L."/>
            <person name="Palmer G.H."/>
            <person name="McGuire T.C."/>
            <person name="Knowles D.P. Jr."/>
        </authorList>
    </citation>
    <scope>NUCLEOTIDE SEQUENCE [LARGE SCALE GENOMIC DNA]</scope>
    <source>
        <strain>St. Maries</strain>
    </source>
</reference>
<evidence type="ECO:0000255" key="1">
    <source>
        <dbReference type="HAMAP-Rule" id="MF_00001"/>
    </source>
</evidence>
<proteinExistence type="inferred from homology"/>
<dbReference type="EC" id="2.1.3.2" evidence="1"/>
<dbReference type="EMBL" id="CP000030">
    <property type="protein sequence ID" value="AAV86645.1"/>
    <property type="molecule type" value="Genomic_DNA"/>
</dbReference>
<dbReference type="RefSeq" id="WP_011114382.1">
    <property type="nucleotide sequence ID" value="NZ_AFMU01000036.1"/>
</dbReference>
<dbReference type="SMR" id="Q5PAN5"/>
<dbReference type="KEGG" id="ama:AM662"/>
<dbReference type="HOGENOM" id="CLU_043846_2_0_5"/>
<dbReference type="UniPathway" id="UPA00070">
    <property type="reaction ID" value="UER00116"/>
</dbReference>
<dbReference type="GO" id="GO:0005829">
    <property type="term" value="C:cytosol"/>
    <property type="evidence" value="ECO:0007669"/>
    <property type="project" value="TreeGrafter"/>
</dbReference>
<dbReference type="GO" id="GO:0016597">
    <property type="term" value="F:amino acid binding"/>
    <property type="evidence" value="ECO:0007669"/>
    <property type="project" value="InterPro"/>
</dbReference>
<dbReference type="GO" id="GO:0004070">
    <property type="term" value="F:aspartate carbamoyltransferase activity"/>
    <property type="evidence" value="ECO:0007669"/>
    <property type="project" value="UniProtKB-UniRule"/>
</dbReference>
<dbReference type="GO" id="GO:0006207">
    <property type="term" value="P:'de novo' pyrimidine nucleobase biosynthetic process"/>
    <property type="evidence" value="ECO:0007669"/>
    <property type="project" value="InterPro"/>
</dbReference>
<dbReference type="GO" id="GO:0044205">
    <property type="term" value="P:'de novo' UMP biosynthetic process"/>
    <property type="evidence" value="ECO:0007669"/>
    <property type="project" value="UniProtKB-UniRule"/>
</dbReference>
<dbReference type="GO" id="GO:0006520">
    <property type="term" value="P:amino acid metabolic process"/>
    <property type="evidence" value="ECO:0007669"/>
    <property type="project" value="InterPro"/>
</dbReference>
<dbReference type="Gene3D" id="3.40.50.1370">
    <property type="entry name" value="Aspartate/ornithine carbamoyltransferase"/>
    <property type="match status" value="2"/>
</dbReference>
<dbReference type="HAMAP" id="MF_00001">
    <property type="entry name" value="Asp_carb_tr"/>
    <property type="match status" value="1"/>
</dbReference>
<dbReference type="InterPro" id="IPR006132">
    <property type="entry name" value="Asp/Orn_carbamoyltranf_P-bd"/>
</dbReference>
<dbReference type="InterPro" id="IPR006130">
    <property type="entry name" value="Asp/Orn_carbamoylTrfase"/>
</dbReference>
<dbReference type="InterPro" id="IPR036901">
    <property type="entry name" value="Asp/Orn_carbamoylTrfase_sf"/>
</dbReference>
<dbReference type="InterPro" id="IPR002082">
    <property type="entry name" value="Asp_carbamoyltransf"/>
</dbReference>
<dbReference type="InterPro" id="IPR006131">
    <property type="entry name" value="Asp_carbamoyltransf_Asp/Orn-bd"/>
</dbReference>
<dbReference type="NCBIfam" id="TIGR00670">
    <property type="entry name" value="asp_carb_tr"/>
    <property type="match status" value="1"/>
</dbReference>
<dbReference type="NCBIfam" id="NF002032">
    <property type="entry name" value="PRK00856.1"/>
    <property type="match status" value="1"/>
</dbReference>
<dbReference type="PANTHER" id="PTHR45753:SF6">
    <property type="entry name" value="ASPARTATE CARBAMOYLTRANSFERASE"/>
    <property type="match status" value="1"/>
</dbReference>
<dbReference type="PANTHER" id="PTHR45753">
    <property type="entry name" value="ORNITHINE CARBAMOYLTRANSFERASE, MITOCHONDRIAL"/>
    <property type="match status" value="1"/>
</dbReference>
<dbReference type="Pfam" id="PF00185">
    <property type="entry name" value="OTCace"/>
    <property type="match status" value="1"/>
</dbReference>
<dbReference type="Pfam" id="PF02729">
    <property type="entry name" value="OTCace_N"/>
    <property type="match status" value="1"/>
</dbReference>
<dbReference type="PRINTS" id="PR00100">
    <property type="entry name" value="AOTCASE"/>
</dbReference>
<dbReference type="PRINTS" id="PR00101">
    <property type="entry name" value="ATCASE"/>
</dbReference>
<dbReference type="SUPFAM" id="SSF53671">
    <property type="entry name" value="Aspartate/ornithine carbamoyltransferase"/>
    <property type="match status" value="1"/>
</dbReference>
<dbReference type="PROSITE" id="PS00097">
    <property type="entry name" value="CARBAMOYLTRANSFERASE"/>
    <property type="match status" value="1"/>
</dbReference>
<protein>
    <recommendedName>
        <fullName evidence="1">Aspartate carbamoyltransferase catalytic subunit</fullName>
        <ecNumber evidence="1">2.1.3.2</ecNumber>
    </recommendedName>
    <alternativeName>
        <fullName evidence="1">Aspartate transcarbamylase</fullName>
        <shortName evidence="1">ATCase</shortName>
    </alternativeName>
</protein>
<accession>Q5PAN5</accession>
<comment type="function">
    <text evidence="1">Catalyzes the condensation of carbamoyl phosphate and aspartate to form carbamoyl aspartate and inorganic phosphate, the committed step in the de novo pyrimidine nucleotide biosynthesis pathway.</text>
</comment>
<comment type="catalytic activity">
    <reaction evidence="1">
        <text>carbamoyl phosphate + L-aspartate = N-carbamoyl-L-aspartate + phosphate + H(+)</text>
        <dbReference type="Rhea" id="RHEA:20013"/>
        <dbReference type="ChEBI" id="CHEBI:15378"/>
        <dbReference type="ChEBI" id="CHEBI:29991"/>
        <dbReference type="ChEBI" id="CHEBI:32814"/>
        <dbReference type="ChEBI" id="CHEBI:43474"/>
        <dbReference type="ChEBI" id="CHEBI:58228"/>
        <dbReference type="EC" id="2.1.3.2"/>
    </reaction>
</comment>
<comment type="pathway">
    <text evidence="1">Pyrimidine metabolism; UMP biosynthesis via de novo pathway; (S)-dihydroorotate from bicarbonate: step 2/3.</text>
</comment>
<comment type="subunit">
    <text evidence="1">Heterododecamer (2C3:3R2) of six catalytic PyrB chains organized as two trimers (C3), and six regulatory PyrI chains organized as three dimers (R2).</text>
</comment>
<comment type="similarity">
    <text evidence="1">Belongs to the aspartate/ornithine carbamoyltransferase superfamily. ATCase family.</text>
</comment>
<name>PYRB_ANAMM</name>
<sequence length="298" mass="32701">MGNLKKLLRVSDLSDEDVENLLILANKYMAQEASDEVLRGKVIVNLFFESSTRTLLAFEIAEKALGAISVTLNVAMSSICKGESISDTMSTMAAMGTDLVVVRSDQSCMVDEIAKRAGDCLVINAGDGNHEHPTQAITDYATIRSLKGGEVRGLKVAICGDVFHSRVARSNIRLLSRYGADIRVVTPMRVDHVPDGVSLVTRSLEEGIEGADVIMLLRIQRERMTNGDFMLDKEYSRLYMLDEKRLSLAKDDVIVMHPGPMNRGVEISDEVADNHSSVLFQVKVGAAVRKAVLHYMLG</sequence>
<feature type="chain" id="PRO_0000113085" description="Aspartate carbamoyltransferase catalytic subunit">
    <location>
        <begin position="1"/>
        <end position="298"/>
    </location>
</feature>
<feature type="binding site" evidence="1">
    <location>
        <position position="53"/>
    </location>
    <ligand>
        <name>carbamoyl phosphate</name>
        <dbReference type="ChEBI" id="CHEBI:58228"/>
    </ligand>
</feature>
<feature type="binding site" evidence="1">
    <location>
        <position position="54"/>
    </location>
    <ligand>
        <name>carbamoyl phosphate</name>
        <dbReference type="ChEBI" id="CHEBI:58228"/>
    </ligand>
</feature>
<feature type="binding site" evidence="1">
    <location>
        <position position="81"/>
    </location>
    <ligand>
        <name>L-aspartate</name>
        <dbReference type="ChEBI" id="CHEBI:29991"/>
    </ligand>
</feature>
<feature type="binding site" evidence="1">
    <location>
        <position position="103"/>
    </location>
    <ligand>
        <name>carbamoyl phosphate</name>
        <dbReference type="ChEBI" id="CHEBI:58228"/>
    </ligand>
</feature>
<feature type="binding site" evidence="1">
    <location>
        <position position="132"/>
    </location>
    <ligand>
        <name>carbamoyl phosphate</name>
        <dbReference type="ChEBI" id="CHEBI:58228"/>
    </ligand>
</feature>
<feature type="binding site" evidence="1">
    <location>
        <position position="135"/>
    </location>
    <ligand>
        <name>carbamoyl phosphate</name>
        <dbReference type="ChEBI" id="CHEBI:58228"/>
    </ligand>
</feature>
<feature type="binding site" evidence="1">
    <location>
        <position position="166"/>
    </location>
    <ligand>
        <name>L-aspartate</name>
        <dbReference type="ChEBI" id="CHEBI:29991"/>
    </ligand>
</feature>
<feature type="binding site" evidence="1">
    <location>
        <position position="218"/>
    </location>
    <ligand>
        <name>L-aspartate</name>
        <dbReference type="ChEBI" id="CHEBI:29991"/>
    </ligand>
</feature>
<feature type="binding site" evidence="1">
    <location>
        <position position="259"/>
    </location>
    <ligand>
        <name>carbamoyl phosphate</name>
        <dbReference type="ChEBI" id="CHEBI:58228"/>
    </ligand>
</feature>
<feature type="binding site" evidence="1">
    <location>
        <position position="260"/>
    </location>
    <ligand>
        <name>carbamoyl phosphate</name>
        <dbReference type="ChEBI" id="CHEBI:58228"/>
    </ligand>
</feature>
<organism>
    <name type="scientific">Anaplasma marginale (strain St. Maries)</name>
    <dbReference type="NCBI Taxonomy" id="234826"/>
    <lineage>
        <taxon>Bacteria</taxon>
        <taxon>Pseudomonadati</taxon>
        <taxon>Pseudomonadota</taxon>
        <taxon>Alphaproteobacteria</taxon>
        <taxon>Rickettsiales</taxon>
        <taxon>Anaplasmataceae</taxon>
        <taxon>Anaplasma</taxon>
    </lineage>
</organism>
<keyword id="KW-0665">Pyrimidine biosynthesis</keyword>
<keyword id="KW-0808">Transferase</keyword>
<gene>
    <name evidence="1" type="primary">pyrB</name>
    <name type="ordered locus">AM662</name>
</gene>